<gene>
    <name evidence="1" type="primary">zapB</name>
    <name type="ordered locus">Shewmr7_0304</name>
</gene>
<accession>Q0HZZ6</accession>
<proteinExistence type="inferred from homology"/>
<reference key="1">
    <citation type="submission" date="2006-08" db="EMBL/GenBank/DDBJ databases">
        <title>Complete sequence of chromosome 1 of Shewanella sp. MR-7.</title>
        <authorList>
            <person name="Copeland A."/>
            <person name="Lucas S."/>
            <person name="Lapidus A."/>
            <person name="Barry K."/>
            <person name="Detter J.C."/>
            <person name="Glavina del Rio T."/>
            <person name="Hammon N."/>
            <person name="Israni S."/>
            <person name="Dalin E."/>
            <person name="Tice H."/>
            <person name="Pitluck S."/>
            <person name="Kiss H."/>
            <person name="Brettin T."/>
            <person name="Bruce D."/>
            <person name="Han C."/>
            <person name="Tapia R."/>
            <person name="Gilna P."/>
            <person name="Schmutz J."/>
            <person name="Larimer F."/>
            <person name="Land M."/>
            <person name="Hauser L."/>
            <person name="Kyrpides N."/>
            <person name="Mikhailova N."/>
            <person name="Nealson K."/>
            <person name="Konstantinidis K."/>
            <person name="Klappenbach J."/>
            <person name="Tiedje J."/>
            <person name="Richardson P."/>
        </authorList>
    </citation>
    <scope>NUCLEOTIDE SEQUENCE [LARGE SCALE GENOMIC DNA]</scope>
    <source>
        <strain>MR-7</strain>
    </source>
</reference>
<organism>
    <name type="scientific">Shewanella sp. (strain MR-7)</name>
    <dbReference type="NCBI Taxonomy" id="60481"/>
    <lineage>
        <taxon>Bacteria</taxon>
        <taxon>Pseudomonadati</taxon>
        <taxon>Pseudomonadota</taxon>
        <taxon>Gammaproteobacteria</taxon>
        <taxon>Alteromonadales</taxon>
        <taxon>Shewanellaceae</taxon>
        <taxon>Shewanella</taxon>
    </lineage>
</organism>
<name>ZAPB_SHESR</name>
<sequence length="73" mass="8329">MSLELLSKLETKIQATLETIELLKMELEEEKQKASTLSEQNQQLTEQNQQLQQELASWNDKVTGLVGLLNSEI</sequence>
<dbReference type="EMBL" id="CP000444">
    <property type="protein sequence ID" value="ABI41309.1"/>
    <property type="molecule type" value="Genomic_DNA"/>
</dbReference>
<dbReference type="SMR" id="Q0HZZ6"/>
<dbReference type="KEGG" id="shm:Shewmr7_0304"/>
<dbReference type="HOGENOM" id="CLU_171174_1_0_6"/>
<dbReference type="GO" id="GO:0005737">
    <property type="term" value="C:cytoplasm"/>
    <property type="evidence" value="ECO:0007669"/>
    <property type="project" value="UniProtKB-SubCell"/>
</dbReference>
<dbReference type="GO" id="GO:0000917">
    <property type="term" value="P:division septum assembly"/>
    <property type="evidence" value="ECO:0007669"/>
    <property type="project" value="UniProtKB-KW"/>
</dbReference>
<dbReference type="GO" id="GO:0043093">
    <property type="term" value="P:FtsZ-dependent cytokinesis"/>
    <property type="evidence" value="ECO:0007669"/>
    <property type="project" value="UniProtKB-UniRule"/>
</dbReference>
<dbReference type="Gene3D" id="1.20.5.340">
    <property type="match status" value="1"/>
</dbReference>
<dbReference type="HAMAP" id="MF_01196">
    <property type="entry name" value="ZapB"/>
    <property type="match status" value="1"/>
</dbReference>
<dbReference type="InterPro" id="IPR009252">
    <property type="entry name" value="Cell_div_ZapB"/>
</dbReference>
<dbReference type="Pfam" id="PF06005">
    <property type="entry name" value="ZapB"/>
    <property type="match status" value="1"/>
</dbReference>
<comment type="function">
    <text evidence="1">Non-essential, abundant cell division factor that is required for proper Z-ring formation. It is recruited early to the divisome by direct interaction with FtsZ, stimulating Z-ring assembly and thereby promoting cell division earlier in the cell cycle. Its recruitment to the Z-ring requires functional FtsA or ZipA.</text>
</comment>
<comment type="subunit">
    <text evidence="1">Homodimer. The ends of the coiled-coil dimer bind to each other, forming polymers. Interacts with FtsZ.</text>
</comment>
<comment type="subcellular location">
    <subcellularLocation>
        <location>Cytoplasm</location>
    </subcellularLocation>
    <text evidence="1">Localizes to the septum at mid-cell, in a FtsZ-like pattern.</text>
</comment>
<comment type="similarity">
    <text evidence="1">Belongs to the ZapB family.</text>
</comment>
<evidence type="ECO:0000255" key="1">
    <source>
        <dbReference type="HAMAP-Rule" id="MF_01196"/>
    </source>
</evidence>
<feature type="chain" id="PRO_0000333931" description="Cell division protein ZapB">
    <location>
        <begin position="1"/>
        <end position="73"/>
    </location>
</feature>
<feature type="coiled-coil region" evidence="1">
    <location>
        <begin position="3"/>
        <end position="67"/>
    </location>
</feature>
<protein>
    <recommendedName>
        <fullName evidence="1">Cell division protein ZapB</fullName>
    </recommendedName>
</protein>
<keyword id="KW-0131">Cell cycle</keyword>
<keyword id="KW-0132">Cell division</keyword>
<keyword id="KW-0175">Coiled coil</keyword>
<keyword id="KW-0963">Cytoplasm</keyword>
<keyword id="KW-0717">Septation</keyword>